<accession>Q9ZGH4</accession>
<evidence type="ECO:0000269" key="1">
    <source>
    </source>
</evidence>
<evidence type="ECO:0000303" key="2">
    <source>
    </source>
</evidence>
<evidence type="ECO:0000305" key="3"/>
<evidence type="ECO:0000305" key="4">
    <source>
    </source>
</evidence>
<evidence type="ECO:0007829" key="5">
    <source>
        <dbReference type="PDB" id="2OGA"/>
    </source>
</evidence>
<evidence type="ECO:0007829" key="6">
    <source>
        <dbReference type="PDB" id="2OGE"/>
    </source>
</evidence>
<sequence length="379" mass="41184">MSSRAETPRVPFLDLKAAYEELRAETDAAIARVLDSGRYLLGPELEGFEAEFAAYCETDHAVGVNSGMDALQLALRGLGIGPGDEVIVPSHTYIASWLAVSATGATPVPVEPHEDHPTLDPLLVEKAITPRTRALLPVHLYGHPADMDALRELADRHGLHIVEDAAQAHGARYRGRRIGAGSSVAAFSFYPGKNLGCFGDGGAVVTGDPELAERLRMLRNYGSRQKYSHETKGTNSRLDEMQAAVLRIRLAHLDSWNGRRSALAAEYLSGLAGLPGIGLPVTAPDTDPVWHLFTVRTERRDELRSHLDARGIDTLTHYPVPVHLSPAYAGEAPPEGSLPRAESFARQVLSLPIGPHLERPQALRVIDAVREWAERVDQA</sequence>
<reference key="1">
    <citation type="journal article" date="1998" name="Proc. Natl. Acad. Sci. U.S.A.">
        <title>A gene cluster for macrolide antibiotic biosynthesis in Streptomyces venezuelae: architecture of metabolic diversity.</title>
        <authorList>
            <person name="Xue Y."/>
            <person name="Zhao L."/>
            <person name="Liu H.W."/>
            <person name="Sherman D.H."/>
        </authorList>
    </citation>
    <scope>NUCLEOTIDE SEQUENCE [GENOMIC DNA]</scope>
    <source>
        <strain>ATCC 15439 / DSM 41110 / IMRU3627 / M-2140</strain>
    </source>
</reference>
<reference key="2">
    <citation type="journal article" date="2007" name="Protein Sci.">
        <title>Molecular architecture of DesV from Streptomyces venezuelae: a PLP-dependent transaminase involved in the biosynthesis of the unusual sugar desosamine.</title>
        <authorList>
            <person name="Burgie E.S."/>
            <person name="Thoden J.B."/>
            <person name="Holden H.M."/>
        </authorList>
    </citation>
    <scope>X-RAY CRYSTALLOGRAPHY (2.05 ANGSTROMS) IN COMPLEX WITH PYRIDOXAL PHOSPHATE ANALOG</scope>
    <scope>FUNCTION</scope>
    <scope>COFACTOR</scope>
    <scope>SUBUNIT</scope>
    <source>
        <strain>ATCC 15439 / DSM 41110 / IMRU3627 / M-2140</strain>
    </source>
</reference>
<comment type="function">
    <text evidence="4">Involved in the biosynthesis of dTDP-alpha-D-desosamine, a sugar found in several bacterial macrolide antibiotics. Catalyzes the reversible transfer of the amino group from L-glutamate to the C-3 position of dTDP-3-keto-4,6-deoxyglucose to yield dTDP-3-amino-3,4,6-trideoxyglucose.</text>
</comment>
<comment type="catalytic activity">
    <reaction evidence="4">
        <text>dTDP-3-amino-3,4,6-trideoxy-alpha-D-glucose + 2-oxoglutarate = dTDP-3-dehydro-4,6-dideoxy-alpha-D-glucose + L-glutamate</text>
        <dbReference type="Rhea" id="RHEA:39907"/>
        <dbReference type="ChEBI" id="CHEBI:16810"/>
        <dbReference type="ChEBI" id="CHEBI:29985"/>
        <dbReference type="ChEBI" id="CHEBI:63262"/>
        <dbReference type="ChEBI" id="CHEBI:76280"/>
        <dbReference type="EC" id="2.6.1.106"/>
    </reaction>
</comment>
<comment type="cofactor">
    <cofactor evidence="1">
        <name>pyridoxal 5'-phosphate</name>
        <dbReference type="ChEBI" id="CHEBI:597326"/>
    </cofactor>
</comment>
<comment type="pathway">
    <text evidence="3">Antibiotic biosynthesis.</text>
</comment>
<comment type="subunit">
    <text evidence="1">Homodimer.</text>
</comment>
<comment type="similarity">
    <text evidence="3">Belongs to the degT/dnrJ/eryC1 family.</text>
</comment>
<gene>
    <name evidence="2" type="primary">desV</name>
</gene>
<protein>
    <recommendedName>
        <fullName evidence="2">dTDP-3-amino-3,4,6-trideoxy-alpha-D-glucose transaminase</fullName>
        <ecNumber evidence="2">2.6.1.106</ecNumber>
    </recommendedName>
</protein>
<proteinExistence type="evidence at protein level"/>
<organism>
    <name type="scientific">Streptomyces venezuelae</name>
    <dbReference type="NCBI Taxonomy" id="54571"/>
    <lineage>
        <taxon>Bacteria</taxon>
        <taxon>Bacillati</taxon>
        <taxon>Actinomycetota</taxon>
        <taxon>Actinomycetes</taxon>
        <taxon>Kitasatosporales</taxon>
        <taxon>Streptomycetaceae</taxon>
        <taxon>Streptomyces</taxon>
    </lineage>
</organism>
<dbReference type="EC" id="2.6.1.106" evidence="2"/>
<dbReference type="EMBL" id="AF079762">
    <property type="protein sequence ID" value="AAC68680.1"/>
    <property type="molecule type" value="Genomic_DNA"/>
</dbReference>
<dbReference type="RefSeq" id="WP_055641633.1">
    <property type="nucleotide sequence ID" value="NZ_CP059991.1"/>
</dbReference>
<dbReference type="PDB" id="2OGA">
    <property type="method" value="X-ray"/>
    <property type="resolution" value="2.05 A"/>
    <property type="chains" value="A/B/C/D=1-379"/>
</dbReference>
<dbReference type="PDB" id="2OGE">
    <property type="method" value="X-ray"/>
    <property type="resolution" value="2.05 A"/>
    <property type="chains" value="A/B/C/D=1-379"/>
</dbReference>
<dbReference type="PDBsum" id="2OGA"/>
<dbReference type="PDBsum" id="2OGE"/>
<dbReference type="SMR" id="Q9ZGH4"/>
<dbReference type="KEGG" id="ag:AAC68680"/>
<dbReference type="BioCyc" id="MetaCyc:MONOMER-16953"/>
<dbReference type="BRENDA" id="2.6.1.106">
    <property type="organism ID" value="6106"/>
</dbReference>
<dbReference type="EvolutionaryTrace" id="Q9ZGH4"/>
<dbReference type="GO" id="GO:0030170">
    <property type="term" value="F:pyridoxal phosphate binding"/>
    <property type="evidence" value="ECO:0000314"/>
    <property type="project" value="UniProtKB"/>
</dbReference>
<dbReference type="GO" id="GO:0008483">
    <property type="term" value="F:transaminase activity"/>
    <property type="evidence" value="ECO:0000314"/>
    <property type="project" value="UniProtKB"/>
</dbReference>
<dbReference type="GO" id="GO:0033068">
    <property type="term" value="P:macrolide biosynthetic process"/>
    <property type="evidence" value="ECO:0000314"/>
    <property type="project" value="UniProtKB"/>
</dbReference>
<dbReference type="GO" id="GO:0000271">
    <property type="term" value="P:polysaccharide biosynthetic process"/>
    <property type="evidence" value="ECO:0007669"/>
    <property type="project" value="TreeGrafter"/>
</dbReference>
<dbReference type="CDD" id="cd00616">
    <property type="entry name" value="AHBA_syn"/>
    <property type="match status" value="1"/>
</dbReference>
<dbReference type="FunFam" id="3.40.640.10:FF:000089">
    <property type="entry name" value="Aminotransferase, DegT/DnrJ/EryC1/StrS family"/>
    <property type="match status" value="1"/>
</dbReference>
<dbReference type="Gene3D" id="3.90.1150.10">
    <property type="entry name" value="Aspartate Aminotransferase, domain 1"/>
    <property type="match status" value="1"/>
</dbReference>
<dbReference type="Gene3D" id="3.40.640.10">
    <property type="entry name" value="Type I PLP-dependent aspartate aminotransferase-like (Major domain)"/>
    <property type="match status" value="1"/>
</dbReference>
<dbReference type="InterPro" id="IPR000653">
    <property type="entry name" value="DegT/StrS_aminotransferase"/>
</dbReference>
<dbReference type="InterPro" id="IPR015424">
    <property type="entry name" value="PyrdxlP-dep_Trfase"/>
</dbReference>
<dbReference type="InterPro" id="IPR015421">
    <property type="entry name" value="PyrdxlP-dep_Trfase_major"/>
</dbReference>
<dbReference type="InterPro" id="IPR015422">
    <property type="entry name" value="PyrdxlP-dep_Trfase_small"/>
</dbReference>
<dbReference type="PANTHER" id="PTHR30244:SF36">
    <property type="entry name" value="3-OXO-GLUCOSE-6-PHOSPHATE:GLUTAMATE AMINOTRANSFERASE"/>
    <property type="match status" value="1"/>
</dbReference>
<dbReference type="PANTHER" id="PTHR30244">
    <property type="entry name" value="TRANSAMINASE"/>
    <property type="match status" value="1"/>
</dbReference>
<dbReference type="Pfam" id="PF01041">
    <property type="entry name" value="DegT_DnrJ_EryC1"/>
    <property type="match status" value="1"/>
</dbReference>
<dbReference type="PIRSF" id="PIRSF000390">
    <property type="entry name" value="PLP_StrS"/>
    <property type="match status" value="1"/>
</dbReference>
<dbReference type="SUPFAM" id="SSF53383">
    <property type="entry name" value="PLP-dependent transferases"/>
    <property type="match status" value="1"/>
</dbReference>
<name>DESV_STRVZ</name>
<feature type="chain" id="PRO_0000430832" description="dTDP-3-amino-3,4,6-trideoxy-alpha-D-glucose transaminase">
    <location>
        <begin position="1"/>
        <end position="379"/>
    </location>
</feature>
<feature type="binding site" evidence="1">
    <location>
        <position position="67"/>
    </location>
    <ligand>
        <name>pyridoxal 5'-phosphate</name>
        <dbReference type="ChEBI" id="CHEBI:597326"/>
    </ligand>
</feature>
<feature type="binding site" evidence="1">
    <location>
        <position position="167"/>
    </location>
    <ligand>
        <name>pyridoxal 5'-phosphate</name>
        <dbReference type="ChEBI" id="CHEBI:597326"/>
    </ligand>
</feature>
<feature type="binding site" evidence="1">
    <location>
        <begin position="188"/>
        <end position="193"/>
    </location>
    <ligand>
        <name>pyridoxal 5'-phosphate</name>
        <dbReference type="ChEBI" id="CHEBI:597326"/>
    </ligand>
</feature>
<feature type="binding site" evidence="1">
    <location>
        <position position="221"/>
    </location>
    <ligand>
        <name>pyridoxal 5'-phosphate</name>
        <dbReference type="ChEBI" id="CHEBI:597326"/>
    </ligand>
</feature>
<feature type="binding site" evidence="1">
    <location>
        <position position="227"/>
    </location>
    <ligand>
        <name>pyridoxal 5'-phosphate</name>
        <dbReference type="ChEBI" id="CHEBI:597326"/>
    </ligand>
</feature>
<feature type="binding site" evidence="1">
    <location>
        <begin position="235"/>
        <end position="237"/>
    </location>
    <ligand>
        <name>pyridoxal 5'-phosphate</name>
        <dbReference type="ChEBI" id="CHEBI:597326"/>
    </ligand>
</feature>
<feature type="binding site" evidence="1">
    <location>
        <position position="318"/>
    </location>
    <ligand>
        <name>pyridoxal 5'-phosphate</name>
        <dbReference type="ChEBI" id="CHEBI:597326"/>
    </ligand>
</feature>
<feature type="modified residue" description="N6-(pyridoxal phosphate)lysine" evidence="4">
    <location>
        <position position="193"/>
    </location>
</feature>
<feature type="helix" evidence="5">
    <location>
        <begin position="15"/>
        <end position="21"/>
    </location>
</feature>
<feature type="helix" evidence="5">
    <location>
        <begin position="23"/>
        <end position="36"/>
    </location>
</feature>
<feature type="strand" evidence="5">
    <location>
        <begin position="40"/>
        <end position="42"/>
    </location>
</feature>
<feature type="helix" evidence="5">
    <location>
        <begin position="43"/>
        <end position="55"/>
    </location>
</feature>
<feature type="strand" evidence="5">
    <location>
        <begin position="58"/>
        <end position="65"/>
    </location>
</feature>
<feature type="helix" evidence="5">
    <location>
        <begin position="67"/>
        <end position="77"/>
    </location>
</feature>
<feature type="strand" evidence="5">
    <location>
        <begin position="85"/>
        <end position="92"/>
    </location>
</feature>
<feature type="helix" evidence="5">
    <location>
        <begin position="95"/>
        <end position="102"/>
    </location>
</feature>
<feature type="strand" evidence="5">
    <location>
        <begin position="106"/>
        <end position="110"/>
    </location>
</feature>
<feature type="strand" evidence="5">
    <location>
        <begin position="114"/>
        <end position="119"/>
    </location>
</feature>
<feature type="helix" evidence="5">
    <location>
        <begin position="121"/>
        <end position="127"/>
    </location>
</feature>
<feature type="strand" evidence="5">
    <location>
        <begin position="132"/>
        <end position="135"/>
    </location>
</feature>
<feature type="helix" evidence="5">
    <location>
        <begin position="140"/>
        <end position="142"/>
    </location>
</feature>
<feature type="helix" evidence="5">
    <location>
        <begin position="147"/>
        <end position="157"/>
    </location>
</feature>
<feature type="strand" evidence="6">
    <location>
        <begin position="160"/>
        <end position="164"/>
    </location>
</feature>
<feature type="strand" evidence="5">
    <location>
        <begin position="184"/>
        <end position="188"/>
    </location>
</feature>
<feature type="strand" evidence="5">
    <location>
        <begin position="193"/>
        <end position="195"/>
    </location>
</feature>
<feature type="strand" evidence="5">
    <location>
        <begin position="202"/>
        <end position="207"/>
    </location>
</feature>
<feature type="helix" evidence="5">
    <location>
        <begin position="209"/>
        <end position="219"/>
    </location>
</feature>
<feature type="helix" evidence="5">
    <location>
        <begin position="240"/>
        <end position="251"/>
    </location>
</feature>
<feature type="helix" evidence="5">
    <location>
        <begin position="253"/>
        <end position="270"/>
    </location>
</feature>
<feature type="turn" evidence="5">
    <location>
        <begin position="271"/>
        <end position="273"/>
    </location>
</feature>
<feature type="strand" evidence="5">
    <location>
        <begin position="291"/>
        <end position="296"/>
    </location>
</feature>
<feature type="helix" evidence="5">
    <location>
        <begin position="300"/>
        <end position="309"/>
    </location>
</feature>
<feature type="helix" evidence="5">
    <location>
        <begin position="322"/>
        <end position="324"/>
    </location>
</feature>
<feature type="helix" evidence="5">
    <location>
        <begin position="326"/>
        <end position="329"/>
    </location>
</feature>
<feature type="helix" evidence="5">
    <location>
        <begin position="339"/>
        <end position="347"/>
    </location>
</feature>
<feature type="strand" evidence="5">
    <location>
        <begin position="348"/>
        <end position="351"/>
    </location>
</feature>
<feature type="helix" evidence="5">
    <location>
        <begin position="359"/>
        <end position="374"/>
    </location>
</feature>
<keyword id="KW-0002">3D-structure</keyword>
<keyword id="KW-0045">Antibiotic biosynthesis</keyword>
<keyword id="KW-0663">Pyridoxal phosphate</keyword>
<keyword id="KW-0808">Transferase</keyword>